<feature type="chain" id="PRO_1000084530" description="Ribosome maturation factor RimP">
    <location>
        <begin position="1"/>
        <end position="157"/>
    </location>
</feature>
<comment type="function">
    <text evidence="1">Required for maturation of 30S ribosomal subunits.</text>
</comment>
<comment type="subcellular location">
    <subcellularLocation>
        <location evidence="1">Cytoplasm</location>
    </subcellularLocation>
</comment>
<comment type="similarity">
    <text evidence="1">Belongs to the RimP family.</text>
</comment>
<proteinExistence type="inferred from homology"/>
<keyword id="KW-0963">Cytoplasm</keyword>
<keyword id="KW-0690">Ribosome biogenesis</keyword>
<accession>A9BH33</accession>
<name>RIMP_PETMO</name>
<evidence type="ECO:0000255" key="1">
    <source>
        <dbReference type="HAMAP-Rule" id="MF_01077"/>
    </source>
</evidence>
<gene>
    <name evidence="1" type="primary">rimP</name>
    <name type="ordered locus">Pmob_0529</name>
</gene>
<dbReference type="EMBL" id="CP000879">
    <property type="protein sequence ID" value="ABX31263.1"/>
    <property type="molecule type" value="Genomic_DNA"/>
</dbReference>
<dbReference type="RefSeq" id="WP_012208367.1">
    <property type="nucleotide sequence ID" value="NC_010003.1"/>
</dbReference>
<dbReference type="SMR" id="A9BH33"/>
<dbReference type="STRING" id="403833.Pmob_0529"/>
<dbReference type="KEGG" id="pmo:Pmob_0529"/>
<dbReference type="eggNOG" id="COG0779">
    <property type="taxonomic scope" value="Bacteria"/>
</dbReference>
<dbReference type="HOGENOM" id="CLU_070525_2_2_0"/>
<dbReference type="OrthoDB" id="9805006at2"/>
<dbReference type="Proteomes" id="UP000000789">
    <property type="component" value="Chromosome"/>
</dbReference>
<dbReference type="GO" id="GO:0005829">
    <property type="term" value="C:cytosol"/>
    <property type="evidence" value="ECO:0007669"/>
    <property type="project" value="TreeGrafter"/>
</dbReference>
<dbReference type="GO" id="GO:0000028">
    <property type="term" value="P:ribosomal small subunit assembly"/>
    <property type="evidence" value="ECO:0007669"/>
    <property type="project" value="TreeGrafter"/>
</dbReference>
<dbReference type="GO" id="GO:0006412">
    <property type="term" value="P:translation"/>
    <property type="evidence" value="ECO:0007669"/>
    <property type="project" value="TreeGrafter"/>
</dbReference>
<dbReference type="CDD" id="cd01734">
    <property type="entry name" value="YlxS_C"/>
    <property type="match status" value="1"/>
</dbReference>
<dbReference type="Gene3D" id="3.30.300.70">
    <property type="entry name" value="RimP-like superfamily, N-terminal"/>
    <property type="match status" value="1"/>
</dbReference>
<dbReference type="HAMAP" id="MF_01077">
    <property type="entry name" value="RimP"/>
    <property type="match status" value="1"/>
</dbReference>
<dbReference type="InterPro" id="IPR003728">
    <property type="entry name" value="Ribosome_maturation_RimP"/>
</dbReference>
<dbReference type="InterPro" id="IPR028998">
    <property type="entry name" value="RimP_C"/>
</dbReference>
<dbReference type="InterPro" id="IPR036847">
    <property type="entry name" value="RimP_C_sf"/>
</dbReference>
<dbReference type="InterPro" id="IPR028989">
    <property type="entry name" value="RimP_N"/>
</dbReference>
<dbReference type="InterPro" id="IPR035956">
    <property type="entry name" value="RimP_N_sf"/>
</dbReference>
<dbReference type="PANTHER" id="PTHR33867">
    <property type="entry name" value="RIBOSOME MATURATION FACTOR RIMP"/>
    <property type="match status" value="1"/>
</dbReference>
<dbReference type="PANTHER" id="PTHR33867:SF1">
    <property type="entry name" value="RIBOSOME MATURATION FACTOR RIMP"/>
    <property type="match status" value="1"/>
</dbReference>
<dbReference type="Pfam" id="PF17384">
    <property type="entry name" value="DUF150_C"/>
    <property type="match status" value="1"/>
</dbReference>
<dbReference type="Pfam" id="PF02576">
    <property type="entry name" value="RimP_N"/>
    <property type="match status" value="1"/>
</dbReference>
<dbReference type="SUPFAM" id="SSF74942">
    <property type="entry name" value="YhbC-like, C-terminal domain"/>
    <property type="match status" value="1"/>
</dbReference>
<dbReference type="SUPFAM" id="SSF75420">
    <property type="entry name" value="YhbC-like, N-terminal domain"/>
    <property type="match status" value="1"/>
</dbReference>
<sequence>MLTNKEIKQLIWEKADNVASKLGLEIFDILIKGSNKNKILEVVIDKADGYVSIGDCERFSKAFDPWLDEIDLFDKSYELVVSSPGLDRKLRGKADYERFKGKLAKFILKGKETKHPVVIGYIDEILEDQIKITEKDSGKLFNIDLNEIDKANLEIEL</sequence>
<protein>
    <recommendedName>
        <fullName evidence="1">Ribosome maturation factor RimP</fullName>
    </recommendedName>
</protein>
<reference key="1">
    <citation type="submission" date="2007-11" db="EMBL/GenBank/DDBJ databases">
        <title>Complete sequence of Petroga mobilis SJ95.</title>
        <authorList>
            <consortium name="US DOE Joint Genome Institute"/>
            <person name="Copeland A."/>
            <person name="Lucas S."/>
            <person name="Lapidus A."/>
            <person name="Barry K."/>
            <person name="Glavina del Rio T."/>
            <person name="Dalin E."/>
            <person name="Tice H."/>
            <person name="Pitluck S."/>
            <person name="Meincke L."/>
            <person name="Brettin T."/>
            <person name="Bruce D."/>
            <person name="Detter J.C."/>
            <person name="Han C."/>
            <person name="Kuske C.R."/>
            <person name="Schmutz J."/>
            <person name="Larimer F."/>
            <person name="Land M."/>
            <person name="Hauser L."/>
            <person name="Kyrpides N."/>
            <person name="Mikhailova N."/>
            <person name="Noll K."/>
            <person name="Richardson P."/>
        </authorList>
    </citation>
    <scope>NUCLEOTIDE SEQUENCE [LARGE SCALE GENOMIC DNA]</scope>
    <source>
        <strain>DSM 10674 / SJ95</strain>
    </source>
</reference>
<organism>
    <name type="scientific">Petrotoga mobilis (strain DSM 10674 / SJ95)</name>
    <dbReference type="NCBI Taxonomy" id="403833"/>
    <lineage>
        <taxon>Bacteria</taxon>
        <taxon>Thermotogati</taxon>
        <taxon>Thermotogota</taxon>
        <taxon>Thermotogae</taxon>
        <taxon>Petrotogales</taxon>
        <taxon>Petrotogaceae</taxon>
        <taxon>Petrotoga</taxon>
    </lineage>
</organism>